<accession>Q1LRT6</accession>
<name>SECB_CUPMC</name>
<proteinExistence type="inferred from homology"/>
<organism>
    <name type="scientific">Cupriavidus metallidurans (strain ATCC 43123 / DSM 2839 / NBRC 102507 / CH34)</name>
    <name type="common">Ralstonia metallidurans</name>
    <dbReference type="NCBI Taxonomy" id="266264"/>
    <lineage>
        <taxon>Bacteria</taxon>
        <taxon>Pseudomonadati</taxon>
        <taxon>Pseudomonadota</taxon>
        <taxon>Betaproteobacteria</taxon>
        <taxon>Burkholderiales</taxon>
        <taxon>Burkholderiaceae</taxon>
        <taxon>Cupriavidus</taxon>
    </lineage>
</organism>
<gene>
    <name evidence="1" type="primary">secB</name>
    <name type="ordered locus">Rmet_0254</name>
</gene>
<comment type="function">
    <text evidence="1">One of the proteins required for the normal export of preproteins out of the cell cytoplasm. It is a molecular chaperone that binds to a subset of precursor proteins, maintaining them in a translocation-competent state. It also specifically binds to its receptor SecA.</text>
</comment>
<comment type="subunit">
    <text evidence="1">Homotetramer, a dimer of dimers. One homotetramer interacts with 1 SecA dimer.</text>
</comment>
<comment type="subcellular location">
    <subcellularLocation>
        <location evidence="1">Cytoplasm</location>
    </subcellularLocation>
</comment>
<comment type="similarity">
    <text evidence="1">Belongs to the SecB family.</text>
</comment>
<reference key="1">
    <citation type="journal article" date="2010" name="PLoS ONE">
        <title>The complete genome sequence of Cupriavidus metallidurans strain CH34, a master survivalist in harsh and anthropogenic environments.</title>
        <authorList>
            <person name="Janssen P.J."/>
            <person name="Van Houdt R."/>
            <person name="Moors H."/>
            <person name="Monsieurs P."/>
            <person name="Morin N."/>
            <person name="Michaux A."/>
            <person name="Benotmane M.A."/>
            <person name="Leys N."/>
            <person name="Vallaeys T."/>
            <person name="Lapidus A."/>
            <person name="Monchy S."/>
            <person name="Medigue C."/>
            <person name="Taghavi S."/>
            <person name="McCorkle S."/>
            <person name="Dunn J."/>
            <person name="van der Lelie D."/>
            <person name="Mergeay M."/>
        </authorList>
    </citation>
    <scope>NUCLEOTIDE SEQUENCE [LARGE SCALE GENOMIC DNA]</scope>
    <source>
        <strain>ATCC 43123 / DSM 2839 / NBRC 102507 / CH34</strain>
    </source>
</reference>
<feature type="chain" id="PRO_1000062501" description="Protein-export protein SecB">
    <location>
        <begin position="1"/>
        <end position="172"/>
    </location>
</feature>
<feature type="region of interest" description="Disordered" evidence="2">
    <location>
        <begin position="153"/>
        <end position="172"/>
    </location>
</feature>
<keyword id="KW-0143">Chaperone</keyword>
<keyword id="KW-0963">Cytoplasm</keyword>
<keyword id="KW-0653">Protein transport</keyword>
<keyword id="KW-1185">Reference proteome</keyword>
<keyword id="KW-0811">Translocation</keyword>
<keyword id="KW-0813">Transport</keyword>
<sequence length="172" mass="18886">MSDQQQANQQDDQPFFNIQRVYLKDMSLEQPNSPGIFLESEAPSVEVQVNVGASQLQEGIFEVVVTGTVTTKVQDKVAFLVEAHQAGIFDIRNVPVEQLDPLLGIACPTILYPYLRGNIADVITRAGFQAIHLSEINFQALYEQRLQAAMEEAQGQGGDSGIVMPDGSQARH</sequence>
<dbReference type="EMBL" id="CP000352">
    <property type="protein sequence ID" value="ABF07140.1"/>
    <property type="molecule type" value="Genomic_DNA"/>
</dbReference>
<dbReference type="RefSeq" id="WP_008642655.1">
    <property type="nucleotide sequence ID" value="NC_007973.1"/>
</dbReference>
<dbReference type="SMR" id="Q1LRT6"/>
<dbReference type="STRING" id="266264.Rmet_0254"/>
<dbReference type="GeneID" id="60822979"/>
<dbReference type="KEGG" id="rme:Rmet_0254"/>
<dbReference type="eggNOG" id="COG1952">
    <property type="taxonomic scope" value="Bacteria"/>
</dbReference>
<dbReference type="HOGENOM" id="CLU_111574_1_0_4"/>
<dbReference type="Proteomes" id="UP000002429">
    <property type="component" value="Chromosome"/>
</dbReference>
<dbReference type="GO" id="GO:0005737">
    <property type="term" value="C:cytoplasm"/>
    <property type="evidence" value="ECO:0007669"/>
    <property type="project" value="UniProtKB-SubCell"/>
</dbReference>
<dbReference type="GO" id="GO:0051082">
    <property type="term" value="F:unfolded protein binding"/>
    <property type="evidence" value="ECO:0007669"/>
    <property type="project" value="InterPro"/>
</dbReference>
<dbReference type="GO" id="GO:0006457">
    <property type="term" value="P:protein folding"/>
    <property type="evidence" value="ECO:0007669"/>
    <property type="project" value="UniProtKB-UniRule"/>
</dbReference>
<dbReference type="GO" id="GO:0051262">
    <property type="term" value="P:protein tetramerization"/>
    <property type="evidence" value="ECO:0007669"/>
    <property type="project" value="InterPro"/>
</dbReference>
<dbReference type="GO" id="GO:0015031">
    <property type="term" value="P:protein transport"/>
    <property type="evidence" value="ECO:0007669"/>
    <property type="project" value="UniProtKB-UniRule"/>
</dbReference>
<dbReference type="Gene3D" id="3.10.420.10">
    <property type="entry name" value="SecB-like"/>
    <property type="match status" value="1"/>
</dbReference>
<dbReference type="HAMAP" id="MF_00821">
    <property type="entry name" value="SecB"/>
    <property type="match status" value="1"/>
</dbReference>
<dbReference type="InterPro" id="IPR003708">
    <property type="entry name" value="SecB"/>
</dbReference>
<dbReference type="InterPro" id="IPR035958">
    <property type="entry name" value="SecB-like_sf"/>
</dbReference>
<dbReference type="NCBIfam" id="NF004394">
    <property type="entry name" value="PRK05751.1-5"/>
    <property type="match status" value="1"/>
</dbReference>
<dbReference type="NCBIfam" id="TIGR00809">
    <property type="entry name" value="secB"/>
    <property type="match status" value="1"/>
</dbReference>
<dbReference type="PANTHER" id="PTHR36918">
    <property type="match status" value="1"/>
</dbReference>
<dbReference type="PANTHER" id="PTHR36918:SF1">
    <property type="entry name" value="PROTEIN-EXPORT PROTEIN SECB"/>
    <property type="match status" value="1"/>
</dbReference>
<dbReference type="Pfam" id="PF02556">
    <property type="entry name" value="SecB"/>
    <property type="match status" value="1"/>
</dbReference>
<dbReference type="PRINTS" id="PR01594">
    <property type="entry name" value="SECBCHAPRONE"/>
</dbReference>
<dbReference type="SUPFAM" id="SSF54611">
    <property type="entry name" value="SecB-like"/>
    <property type="match status" value="1"/>
</dbReference>
<evidence type="ECO:0000255" key="1">
    <source>
        <dbReference type="HAMAP-Rule" id="MF_00821"/>
    </source>
</evidence>
<evidence type="ECO:0000256" key="2">
    <source>
        <dbReference type="SAM" id="MobiDB-lite"/>
    </source>
</evidence>
<protein>
    <recommendedName>
        <fullName evidence="1">Protein-export protein SecB</fullName>
    </recommendedName>
</protein>